<feature type="chain" id="PRO_0000239925" description="Large ribosomal subunit protein eL8">
    <location>
        <begin position="1"/>
        <end position="266"/>
    </location>
</feature>
<feature type="modified residue" description="N6-acetyllysine" evidence="2">
    <location>
        <position position="34"/>
    </location>
</feature>
<feature type="modified residue" description="N6-acetyllysine; alternate" evidence="2">
    <location>
        <position position="97"/>
    </location>
</feature>
<feature type="modified residue" description="N6-acetyllysine" evidence="2">
    <location>
        <position position="217"/>
    </location>
</feature>
<feature type="cross-link" description="Glycyl lysine isopeptide (Lys-Gly) (interchain with G-Cter in SUMO2)" evidence="2">
    <location>
        <position position="11"/>
    </location>
</feature>
<feature type="cross-link" description="Glycyl lysine isopeptide (Lys-Gly) (interchain with G-Cter in SUMO2)" evidence="2">
    <location>
        <position position="20"/>
    </location>
</feature>
<feature type="cross-link" description="Glycyl lysine isopeptide (Lys-Gly) (interchain with G-Cter in SUMO2)" evidence="2">
    <location>
        <position position="21"/>
    </location>
</feature>
<feature type="cross-link" description="Glycyl lysine isopeptide (Lys-Gly) (interchain with G-Cter in SUMO2)" evidence="2">
    <location>
        <position position="48"/>
    </location>
</feature>
<feature type="cross-link" description="Glycyl lysine isopeptide (Lys-Gly) (interchain with G-Cter in SUMO2); alternate" evidence="2">
    <location>
        <position position="97"/>
    </location>
</feature>
<feature type="cross-link" description="Glycyl lysine isopeptide (Lys-Gly) (interchain with G-Cter in SUMO2)" evidence="2">
    <location>
        <position position="125"/>
    </location>
</feature>
<feature type="cross-link" description="Glycyl lysine isopeptide (Lys-Gly) (interchain with G-Cter in SUMO2)" evidence="2">
    <location>
        <position position="245"/>
    </location>
</feature>
<protein>
    <recommendedName>
        <fullName evidence="3">Large ribosomal subunit protein eL8</fullName>
    </recommendedName>
    <alternativeName>
        <fullName>60S ribosomal protein L7a</fullName>
    </alternativeName>
</protein>
<accession>Q2TBQ5</accession>
<accession>A5D9D0</accession>
<gene>
    <name type="primary">RPL7A</name>
</gene>
<organism>
    <name type="scientific">Bos taurus</name>
    <name type="common">Bovine</name>
    <dbReference type="NCBI Taxonomy" id="9913"/>
    <lineage>
        <taxon>Eukaryota</taxon>
        <taxon>Metazoa</taxon>
        <taxon>Chordata</taxon>
        <taxon>Craniata</taxon>
        <taxon>Vertebrata</taxon>
        <taxon>Euteleostomi</taxon>
        <taxon>Mammalia</taxon>
        <taxon>Eutheria</taxon>
        <taxon>Laurasiatheria</taxon>
        <taxon>Artiodactyla</taxon>
        <taxon>Ruminantia</taxon>
        <taxon>Pecora</taxon>
        <taxon>Bovidae</taxon>
        <taxon>Bovinae</taxon>
        <taxon>Bos</taxon>
    </lineage>
</organism>
<proteinExistence type="evidence at transcript level"/>
<dbReference type="EMBL" id="BT030549">
    <property type="protein sequence ID" value="ABQ12989.1"/>
    <property type="molecule type" value="mRNA"/>
</dbReference>
<dbReference type="EMBL" id="BC109810">
    <property type="protein sequence ID" value="AAI09811.1"/>
    <property type="molecule type" value="mRNA"/>
</dbReference>
<dbReference type="RefSeq" id="NP_001035610.1">
    <property type="nucleotide sequence ID" value="NM_001040520.2"/>
</dbReference>
<dbReference type="SMR" id="Q2TBQ5"/>
<dbReference type="FunCoup" id="Q2TBQ5">
    <property type="interactions" value="2373"/>
</dbReference>
<dbReference type="IntAct" id="Q2TBQ5">
    <property type="interactions" value="1"/>
</dbReference>
<dbReference type="STRING" id="9913.ENSBTAP00000015358"/>
<dbReference type="PaxDb" id="9913-ENSBTAP00000015358"/>
<dbReference type="PeptideAtlas" id="Q2TBQ5"/>
<dbReference type="Ensembl" id="ENSBTAT00000015358.4">
    <property type="protein sequence ID" value="ENSBTAP00000015358.3"/>
    <property type="gene ID" value="ENSBTAG00000011559.4"/>
</dbReference>
<dbReference type="GeneID" id="513128"/>
<dbReference type="KEGG" id="bta:513128"/>
<dbReference type="CTD" id="6130"/>
<dbReference type="VEuPathDB" id="HostDB:ENSBTAG00000011559"/>
<dbReference type="VGNC" id="VGNC:49957">
    <property type="gene designation" value="RPL7A"/>
</dbReference>
<dbReference type="eggNOG" id="KOG3166">
    <property type="taxonomic scope" value="Eukaryota"/>
</dbReference>
<dbReference type="GeneTree" id="ENSGT00940000153294"/>
<dbReference type="HOGENOM" id="CLU_055193_0_1_1"/>
<dbReference type="InParanoid" id="Q2TBQ5"/>
<dbReference type="OMA" id="RMVKWPA"/>
<dbReference type="OrthoDB" id="9632009at2759"/>
<dbReference type="TreeFam" id="TF300788"/>
<dbReference type="Reactome" id="R-BTA-156827">
    <property type="pathway name" value="L13a-mediated translational silencing of Ceruloplasmin expression"/>
</dbReference>
<dbReference type="Reactome" id="R-BTA-1799339">
    <property type="pathway name" value="SRP-dependent cotranslational protein targeting to membrane"/>
</dbReference>
<dbReference type="Reactome" id="R-BTA-6791226">
    <property type="pathway name" value="Major pathway of rRNA processing in the nucleolus and cytosol"/>
</dbReference>
<dbReference type="Reactome" id="R-BTA-72689">
    <property type="pathway name" value="Formation of a pool of free 40S subunits"/>
</dbReference>
<dbReference type="Reactome" id="R-BTA-72706">
    <property type="pathway name" value="GTP hydrolysis and joining of the 60S ribosomal subunit"/>
</dbReference>
<dbReference type="Reactome" id="R-BTA-975956">
    <property type="pathway name" value="Nonsense Mediated Decay (NMD) independent of the Exon Junction Complex (EJC)"/>
</dbReference>
<dbReference type="Reactome" id="R-BTA-975957">
    <property type="pathway name" value="Nonsense Mediated Decay (NMD) enhanced by the Exon Junction Complex (EJC)"/>
</dbReference>
<dbReference type="CD-CODE" id="D7FE2080">
    <property type="entry name" value="Nucleolus"/>
</dbReference>
<dbReference type="Proteomes" id="UP000009136">
    <property type="component" value="Chromosome 11"/>
</dbReference>
<dbReference type="Bgee" id="ENSBTAG00000011559">
    <property type="expression patterns" value="Expressed in theca cell and 106 other cell types or tissues"/>
</dbReference>
<dbReference type="GO" id="GO:0022625">
    <property type="term" value="C:cytosolic large ribosomal subunit"/>
    <property type="evidence" value="ECO:0000318"/>
    <property type="project" value="GO_Central"/>
</dbReference>
<dbReference type="GO" id="GO:0016020">
    <property type="term" value="C:membrane"/>
    <property type="evidence" value="ECO:0007669"/>
    <property type="project" value="Ensembl"/>
</dbReference>
<dbReference type="GO" id="GO:0005730">
    <property type="term" value="C:nucleolus"/>
    <property type="evidence" value="ECO:0007669"/>
    <property type="project" value="Ensembl"/>
</dbReference>
<dbReference type="GO" id="GO:0045202">
    <property type="term" value="C:synapse"/>
    <property type="evidence" value="ECO:0007669"/>
    <property type="project" value="Ensembl"/>
</dbReference>
<dbReference type="GO" id="GO:0003723">
    <property type="term" value="F:RNA binding"/>
    <property type="evidence" value="ECO:0000318"/>
    <property type="project" value="GO_Central"/>
</dbReference>
<dbReference type="GO" id="GO:0003735">
    <property type="term" value="F:structural constituent of ribosome"/>
    <property type="evidence" value="ECO:0007669"/>
    <property type="project" value="Ensembl"/>
</dbReference>
<dbReference type="GO" id="GO:0000470">
    <property type="term" value="P:maturation of LSU-rRNA"/>
    <property type="evidence" value="ECO:0000318"/>
    <property type="project" value="GO_Central"/>
</dbReference>
<dbReference type="FunFam" id="3.30.1330.30:FF:000003">
    <property type="entry name" value="60S ribosomal protein L7a"/>
    <property type="match status" value="1"/>
</dbReference>
<dbReference type="Gene3D" id="3.30.1330.30">
    <property type="match status" value="1"/>
</dbReference>
<dbReference type="InterPro" id="IPR050257">
    <property type="entry name" value="eL8/uL1-like"/>
</dbReference>
<dbReference type="InterPro" id="IPR029064">
    <property type="entry name" value="Ribosomal_eL30-like_sf"/>
</dbReference>
<dbReference type="InterPro" id="IPR004037">
    <property type="entry name" value="Ribosomal_eL8-like_CS"/>
</dbReference>
<dbReference type="InterPro" id="IPR004038">
    <property type="entry name" value="Ribosomal_eL8/eL30/eS12/Gad45"/>
</dbReference>
<dbReference type="InterPro" id="IPR018492">
    <property type="entry name" value="Ribosomal_eL8/Nhp2"/>
</dbReference>
<dbReference type="InterPro" id="IPR001921">
    <property type="entry name" value="Ribosomal_eL8_euk"/>
</dbReference>
<dbReference type="PANTHER" id="PTHR23105">
    <property type="entry name" value="RIBOSOMAL PROTEIN L7AE FAMILY MEMBER"/>
    <property type="match status" value="1"/>
</dbReference>
<dbReference type="Pfam" id="PF01248">
    <property type="entry name" value="Ribosomal_L7Ae"/>
    <property type="match status" value="1"/>
</dbReference>
<dbReference type="PRINTS" id="PR00881">
    <property type="entry name" value="L7ARS6FAMILY"/>
</dbReference>
<dbReference type="PRINTS" id="PR00882">
    <property type="entry name" value="RIBOSOMALL7A"/>
</dbReference>
<dbReference type="SUPFAM" id="SSF55315">
    <property type="entry name" value="L30e-like"/>
    <property type="match status" value="1"/>
</dbReference>
<dbReference type="PROSITE" id="PS01082">
    <property type="entry name" value="RIBOSOMAL_L7AE"/>
    <property type="match status" value="1"/>
</dbReference>
<keyword id="KW-0007">Acetylation</keyword>
<keyword id="KW-0963">Cytoplasm</keyword>
<keyword id="KW-1017">Isopeptide bond</keyword>
<keyword id="KW-1185">Reference proteome</keyword>
<keyword id="KW-0687">Ribonucleoprotein</keyword>
<keyword id="KW-0689">Ribosomal protein</keyword>
<keyword id="KW-0832">Ubl conjugation</keyword>
<name>RL7A_BOVIN</name>
<comment type="function">
    <text evidence="2">Component of the large ribosomal subunit. The ribosome is a large ribonucleoprotein complex responsible for the synthesis of proteins in the cell.</text>
</comment>
<comment type="subunit">
    <text evidence="1 2">Component of the large ribosomal subunit (By similarity). Interacts with CRY1 (By similarity). Interacts with DICER1, AGO2, TARBP2, MOV10 and EIF6; they form a large RNA-induced silencing complex (RISC) (By similarity).</text>
</comment>
<comment type="subcellular location">
    <subcellularLocation>
        <location evidence="2">Cytoplasm</location>
    </subcellularLocation>
</comment>
<comment type="similarity">
    <text evidence="3">Belongs to the eukaryotic ribosomal protein eL8 family.</text>
</comment>
<evidence type="ECO:0000250" key="1">
    <source>
        <dbReference type="UniProtKB" id="P12970"/>
    </source>
</evidence>
<evidence type="ECO:0000250" key="2">
    <source>
        <dbReference type="UniProtKB" id="P62424"/>
    </source>
</evidence>
<evidence type="ECO:0000305" key="3"/>
<reference key="1">
    <citation type="journal article" date="2005" name="BMC Genomics">
        <title>Characterization of 954 bovine full-CDS cDNA sequences.</title>
        <authorList>
            <person name="Harhay G.P."/>
            <person name="Sonstegard T.S."/>
            <person name="Keele J.W."/>
            <person name="Heaton M.P."/>
            <person name="Clawson M.L."/>
            <person name="Snelling W.M."/>
            <person name="Wiedmann R.T."/>
            <person name="Van Tassell C.P."/>
            <person name="Smith T.P.L."/>
        </authorList>
    </citation>
    <scope>NUCLEOTIDE SEQUENCE [LARGE SCALE MRNA]</scope>
</reference>
<reference key="2">
    <citation type="submission" date="2005-11" db="EMBL/GenBank/DDBJ databases">
        <authorList>
            <consortium name="NIH - Mammalian Gene Collection (MGC) project"/>
        </authorList>
    </citation>
    <scope>NUCLEOTIDE SEQUENCE [LARGE SCALE MRNA]</scope>
    <source>
        <strain>Crossbred X Angus</strain>
        <tissue>Liver</tissue>
    </source>
</reference>
<sequence>MPKGKKAKGKKVAPAPAVVKKQEAKKVVNPLFEKRPKNFGIGQDIQPKRDLTRFVKWPRYIRLQRQRAILYKRLKVPPAINQFTQALDRQTATQLLKLAHKYRPETKQEKKQRLLARAEKKAAGKGDVPTKRPPVLRAGVNTVTTLVENKKAQLVVIAHDVDPIELVVFLPALCRKMGVPYCIIKGKARLGRLVHRKTCTTVAFTQVNSEDKSALAKLVEAIRTNYNDRYDEIRRHWGGNVLGPKSVARIAKLEKAKAKELATKLG</sequence>